<organism>
    <name type="scientific">Leuconostoc citreum (strain KM20)</name>
    <dbReference type="NCBI Taxonomy" id="349519"/>
    <lineage>
        <taxon>Bacteria</taxon>
        <taxon>Bacillati</taxon>
        <taxon>Bacillota</taxon>
        <taxon>Bacilli</taxon>
        <taxon>Lactobacillales</taxon>
        <taxon>Lactobacillaceae</taxon>
        <taxon>Leuconostoc</taxon>
    </lineage>
</organism>
<gene>
    <name evidence="2" type="primary">ddl</name>
    <name type="ordered locus">LCK_00212</name>
</gene>
<dbReference type="EC" id="6.3.2.4" evidence="2"/>
<dbReference type="EMBL" id="DQ489736">
    <property type="protein sequence ID" value="ACA82045.1"/>
    <property type="molecule type" value="Genomic_DNA"/>
</dbReference>
<dbReference type="RefSeq" id="WP_004909228.1">
    <property type="nucleotide sequence ID" value="NC_010471.1"/>
</dbReference>
<dbReference type="SMR" id="B1MWZ3"/>
<dbReference type="STRING" id="349519.LCK_00212"/>
<dbReference type="KEGG" id="lci:LCK_00212"/>
<dbReference type="eggNOG" id="COG1181">
    <property type="taxonomic scope" value="Bacteria"/>
</dbReference>
<dbReference type="HOGENOM" id="CLU_039268_0_1_9"/>
<dbReference type="OrthoDB" id="9813261at2"/>
<dbReference type="UniPathway" id="UPA00219"/>
<dbReference type="Proteomes" id="UP000002166">
    <property type="component" value="Chromosome"/>
</dbReference>
<dbReference type="GO" id="GO:0005829">
    <property type="term" value="C:cytosol"/>
    <property type="evidence" value="ECO:0007669"/>
    <property type="project" value="TreeGrafter"/>
</dbReference>
<dbReference type="GO" id="GO:0005524">
    <property type="term" value="F:ATP binding"/>
    <property type="evidence" value="ECO:0007669"/>
    <property type="project" value="UniProtKB-KW"/>
</dbReference>
<dbReference type="GO" id="GO:0008716">
    <property type="term" value="F:D-alanine-D-alanine ligase activity"/>
    <property type="evidence" value="ECO:0007669"/>
    <property type="project" value="UniProtKB-UniRule"/>
</dbReference>
<dbReference type="GO" id="GO:0046872">
    <property type="term" value="F:metal ion binding"/>
    <property type="evidence" value="ECO:0007669"/>
    <property type="project" value="UniProtKB-KW"/>
</dbReference>
<dbReference type="GO" id="GO:0071555">
    <property type="term" value="P:cell wall organization"/>
    <property type="evidence" value="ECO:0007669"/>
    <property type="project" value="UniProtKB-KW"/>
</dbReference>
<dbReference type="GO" id="GO:0009252">
    <property type="term" value="P:peptidoglycan biosynthetic process"/>
    <property type="evidence" value="ECO:0007669"/>
    <property type="project" value="UniProtKB-UniRule"/>
</dbReference>
<dbReference type="GO" id="GO:0008360">
    <property type="term" value="P:regulation of cell shape"/>
    <property type="evidence" value="ECO:0007669"/>
    <property type="project" value="UniProtKB-KW"/>
</dbReference>
<dbReference type="Gene3D" id="3.40.50.20">
    <property type="match status" value="1"/>
</dbReference>
<dbReference type="Gene3D" id="3.30.1490.20">
    <property type="entry name" value="ATP-grasp fold, A domain"/>
    <property type="match status" value="1"/>
</dbReference>
<dbReference type="Gene3D" id="3.30.470.20">
    <property type="entry name" value="ATP-grasp fold, B domain"/>
    <property type="match status" value="1"/>
</dbReference>
<dbReference type="HAMAP" id="MF_00047">
    <property type="entry name" value="Dala_Dala_lig"/>
    <property type="match status" value="1"/>
</dbReference>
<dbReference type="InterPro" id="IPR011761">
    <property type="entry name" value="ATP-grasp"/>
</dbReference>
<dbReference type="InterPro" id="IPR013815">
    <property type="entry name" value="ATP_grasp_subdomain_1"/>
</dbReference>
<dbReference type="InterPro" id="IPR000291">
    <property type="entry name" value="D-Ala_lig_Van_CS"/>
</dbReference>
<dbReference type="InterPro" id="IPR005905">
    <property type="entry name" value="D_ala_D_ala"/>
</dbReference>
<dbReference type="InterPro" id="IPR011095">
    <property type="entry name" value="Dala_Dala_lig_C"/>
</dbReference>
<dbReference type="InterPro" id="IPR011127">
    <property type="entry name" value="Dala_Dala_lig_N"/>
</dbReference>
<dbReference type="InterPro" id="IPR016185">
    <property type="entry name" value="PreATP-grasp_dom_sf"/>
</dbReference>
<dbReference type="NCBIfam" id="TIGR01205">
    <property type="entry name" value="D_ala_D_alaTIGR"/>
    <property type="match status" value="1"/>
</dbReference>
<dbReference type="NCBIfam" id="NF002528">
    <property type="entry name" value="PRK01966.1-4"/>
    <property type="match status" value="1"/>
</dbReference>
<dbReference type="PANTHER" id="PTHR23132">
    <property type="entry name" value="D-ALANINE--D-ALANINE LIGASE"/>
    <property type="match status" value="1"/>
</dbReference>
<dbReference type="PANTHER" id="PTHR23132:SF25">
    <property type="entry name" value="D-ALANINE--D-ALANINE LIGASE A"/>
    <property type="match status" value="1"/>
</dbReference>
<dbReference type="Pfam" id="PF07478">
    <property type="entry name" value="Dala_Dala_lig_C"/>
    <property type="match status" value="1"/>
</dbReference>
<dbReference type="Pfam" id="PF01820">
    <property type="entry name" value="Dala_Dala_lig_N"/>
    <property type="match status" value="1"/>
</dbReference>
<dbReference type="PIRSF" id="PIRSF039102">
    <property type="entry name" value="Ddl/VanB"/>
    <property type="match status" value="1"/>
</dbReference>
<dbReference type="SUPFAM" id="SSF56059">
    <property type="entry name" value="Glutathione synthetase ATP-binding domain-like"/>
    <property type="match status" value="1"/>
</dbReference>
<dbReference type="SUPFAM" id="SSF52440">
    <property type="entry name" value="PreATP-grasp domain"/>
    <property type="match status" value="1"/>
</dbReference>
<dbReference type="PROSITE" id="PS50975">
    <property type="entry name" value="ATP_GRASP"/>
    <property type="match status" value="1"/>
</dbReference>
<dbReference type="PROSITE" id="PS00843">
    <property type="entry name" value="DALA_DALA_LIGASE_1"/>
    <property type="match status" value="1"/>
</dbReference>
<dbReference type="PROSITE" id="PS00844">
    <property type="entry name" value="DALA_DALA_LIGASE_2"/>
    <property type="match status" value="1"/>
</dbReference>
<name>DDL_LEUCK</name>
<sequence>MTKKYVALIFGGNSSEHDVSKRSAQNFYDAILATGKYRITVFAIAQNGYVLDPERSKRILALEDERPIVADYMTTVDQQDPLSRINALRAAGDFDIFFPVVHGNLGEDGTLQGLFKLLNKPYVGAPLRGHAVSFDKVLTKELLTVNNIRNTKYIVVDEKTAKTLTWAQVVKDLGDVVFVKAANQGSSVGVSRAKTADEFEAALTDSFQYDYKVLIEAAVKGPRELEVGVIGNEDPIVSEIGAHHVPNQGDGDAWYDYNNKFVDNSSVQFEIPANLPDAVTAEVKDMALKAYKVLDLRGEARMDFLLDENNVPYLGEPNTLPGFTNMSLFKRLWDYSDIDNVELVDKLIDYGFAEFEKNAQLSYEFVSLGEEKIGKFN</sequence>
<evidence type="ECO:0000250" key="1"/>
<evidence type="ECO:0000255" key="2">
    <source>
        <dbReference type="HAMAP-Rule" id="MF_00047"/>
    </source>
</evidence>
<keyword id="KW-0067">ATP-binding</keyword>
<keyword id="KW-0133">Cell shape</keyword>
<keyword id="KW-0961">Cell wall biogenesis/degradation</keyword>
<keyword id="KW-0963">Cytoplasm</keyword>
<keyword id="KW-0436">Ligase</keyword>
<keyword id="KW-0460">Magnesium</keyword>
<keyword id="KW-0464">Manganese</keyword>
<keyword id="KW-0479">Metal-binding</keyword>
<keyword id="KW-0547">Nucleotide-binding</keyword>
<keyword id="KW-0573">Peptidoglycan synthesis</keyword>
<keyword id="KW-1185">Reference proteome</keyword>
<proteinExistence type="inferred from homology"/>
<accession>B1MWZ3</accession>
<protein>
    <recommendedName>
        <fullName evidence="2">D-alanine--D-alanine ligase</fullName>
        <ecNumber evidence="2">6.3.2.4</ecNumber>
    </recommendedName>
    <alternativeName>
        <fullName evidence="2">D-Ala-D-Ala ligase</fullName>
    </alternativeName>
    <alternativeName>
        <fullName evidence="2">D-alanylalanine synthetase</fullName>
    </alternativeName>
</protein>
<comment type="function">
    <text evidence="2">Cell wall formation.</text>
</comment>
<comment type="catalytic activity">
    <reaction evidence="2">
        <text>2 D-alanine + ATP = D-alanyl-D-alanine + ADP + phosphate + H(+)</text>
        <dbReference type="Rhea" id="RHEA:11224"/>
        <dbReference type="ChEBI" id="CHEBI:15378"/>
        <dbReference type="ChEBI" id="CHEBI:30616"/>
        <dbReference type="ChEBI" id="CHEBI:43474"/>
        <dbReference type="ChEBI" id="CHEBI:57416"/>
        <dbReference type="ChEBI" id="CHEBI:57822"/>
        <dbReference type="ChEBI" id="CHEBI:456216"/>
        <dbReference type="EC" id="6.3.2.4"/>
    </reaction>
</comment>
<comment type="cofactor">
    <cofactor evidence="1">
        <name>Mg(2+)</name>
        <dbReference type="ChEBI" id="CHEBI:18420"/>
    </cofactor>
    <cofactor evidence="1">
        <name>Mn(2+)</name>
        <dbReference type="ChEBI" id="CHEBI:29035"/>
    </cofactor>
    <text evidence="1">Binds 2 magnesium or manganese ions per subunit.</text>
</comment>
<comment type="pathway">
    <text evidence="2">Cell wall biogenesis; peptidoglycan biosynthesis.</text>
</comment>
<comment type="subcellular location">
    <subcellularLocation>
        <location evidence="2">Cytoplasm</location>
    </subcellularLocation>
</comment>
<comment type="similarity">
    <text evidence="2">Belongs to the D-alanine--D-alanine ligase family.</text>
</comment>
<feature type="chain" id="PRO_1000091192" description="D-alanine--D-alanine ligase">
    <location>
        <begin position="1"/>
        <end position="377"/>
    </location>
</feature>
<feature type="domain" description="ATP-grasp" evidence="2">
    <location>
        <begin position="140"/>
        <end position="349"/>
    </location>
</feature>
<feature type="binding site" evidence="2">
    <location>
        <begin position="170"/>
        <end position="225"/>
    </location>
    <ligand>
        <name>ATP</name>
        <dbReference type="ChEBI" id="CHEBI:30616"/>
    </ligand>
</feature>
<feature type="binding site" evidence="2">
    <location>
        <position position="303"/>
    </location>
    <ligand>
        <name>Mg(2+)</name>
        <dbReference type="ChEBI" id="CHEBI:18420"/>
        <label>1</label>
    </ligand>
</feature>
<feature type="binding site" evidence="2">
    <location>
        <position position="316"/>
    </location>
    <ligand>
        <name>Mg(2+)</name>
        <dbReference type="ChEBI" id="CHEBI:18420"/>
        <label>1</label>
    </ligand>
</feature>
<feature type="binding site" evidence="2">
    <location>
        <position position="316"/>
    </location>
    <ligand>
        <name>Mg(2+)</name>
        <dbReference type="ChEBI" id="CHEBI:18420"/>
        <label>2</label>
    </ligand>
</feature>
<feature type="binding site" evidence="2">
    <location>
        <position position="318"/>
    </location>
    <ligand>
        <name>Mg(2+)</name>
        <dbReference type="ChEBI" id="CHEBI:18420"/>
        <label>2</label>
    </ligand>
</feature>
<reference key="1">
    <citation type="journal article" date="2008" name="J. Bacteriol.">
        <title>Complete genome sequence of Leuconostoc citreum KM20.</title>
        <authorList>
            <person name="Kim J.F."/>
            <person name="Jeong H."/>
            <person name="Lee J.-S."/>
            <person name="Choi S.-H."/>
            <person name="Ha M."/>
            <person name="Hur C.-G."/>
            <person name="Kim J.-S."/>
            <person name="Lee S."/>
            <person name="Park H.-S."/>
            <person name="Park Y.-H."/>
            <person name="Oh T.K."/>
        </authorList>
    </citation>
    <scope>NUCLEOTIDE SEQUENCE [LARGE SCALE GENOMIC DNA]</scope>
    <source>
        <strain>KM20</strain>
    </source>
</reference>